<gene>
    <name evidence="1" type="primary">cbpA</name>
    <name type="ordered locus">Spro_3860</name>
</gene>
<comment type="function">
    <text evidence="1">DNA-binding protein that preferentially recognizes a curved DNA sequence. It is probably a functional analog of DnaJ; displays overlapping activities with DnaJ, but functions under different conditions, probably acting as a molecular chaperone in an adaptive response to environmental stresses other than heat shock. Lacks autonomous chaperone activity; binds native substrates and targets them for recognition by DnaK. Its activity is inhibited by the binding of CbpM.</text>
</comment>
<comment type="subcellular location">
    <subcellularLocation>
        <location evidence="1">Cytoplasm</location>
        <location evidence="1">Nucleoid</location>
    </subcellularLocation>
</comment>
<proteinExistence type="inferred from homology"/>
<sequence length="309" mass="34591">MEFKDYYAILGVKPADDLKAIKTAYRRLARKYHPDVSTESNAEEQFKLVAEAYEVLKDDERRAEYDQLREHRNDPNFGRQTQHGSAHNAEDFSDIFSSMFGEHARGQQHRQRRQGMRGQDVEMEVAIFLEETQAEQTRTIRYSLPVYNAFGMVEQEIPKTLNVKIPAGVGDGERIRLKGQGGPGTDGGASGDLYLIIRIAPHPLFDIVGHNLEIVLPVAPWEAALGAKVPVPTLKDSILLTIPAGSQTGQRLRIKGKGLVGKKETGDLYAVIKVMMPPKPDEKSAALWQQLAEAQQSFDPRKDWSKQNG</sequence>
<dbReference type="EMBL" id="CP000826">
    <property type="protein sequence ID" value="ABV42956.1"/>
    <property type="molecule type" value="Genomic_DNA"/>
</dbReference>
<dbReference type="SMR" id="A8GIL6"/>
<dbReference type="STRING" id="399741.Spro_3860"/>
<dbReference type="KEGG" id="spe:Spro_3860"/>
<dbReference type="eggNOG" id="COG0484">
    <property type="taxonomic scope" value="Bacteria"/>
</dbReference>
<dbReference type="HOGENOM" id="CLU_017633_0_0_6"/>
<dbReference type="OrthoDB" id="9779889at2"/>
<dbReference type="GO" id="GO:0005737">
    <property type="term" value="C:cytoplasm"/>
    <property type="evidence" value="ECO:0007669"/>
    <property type="project" value="UniProtKB-UniRule"/>
</dbReference>
<dbReference type="GO" id="GO:0009295">
    <property type="term" value="C:nucleoid"/>
    <property type="evidence" value="ECO:0007669"/>
    <property type="project" value="UniProtKB-SubCell"/>
</dbReference>
<dbReference type="GO" id="GO:0003681">
    <property type="term" value="F:bent DNA binding"/>
    <property type="evidence" value="ECO:0007669"/>
    <property type="project" value="UniProtKB-UniRule"/>
</dbReference>
<dbReference type="GO" id="GO:0051082">
    <property type="term" value="F:unfolded protein binding"/>
    <property type="evidence" value="ECO:0007669"/>
    <property type="project" value="InterPro"/>
</dbReference>
<dbReference type="GO" id="GO:0051085">
    <property type="term" value="P:chaperone cofactor-dependent protein refolding"/>
    <property type="evidence" value="ECO:0007669"/>
    <property type="project" value="TreeGrafter"/>
</dbReference>
<dbReference type="GO" id="GO:0042026">
    <property type="term" value="P:protein refolding"/>
    <property type="evidence" value="ECO:0007669"/>
    <property type="project" value="TreeGrafter"/>
</dbReference>
<dbReference type="CDD" id="cd06257">
    <property type="entry name" value="DnaJ"/>
    <property type="match status" value="1"/>
</dbReference>
<dbReference type="CDD" id="cd10747">
    <property type="entry name" value="DnaJ_C"/>
    <property type="match status" value="1"/>
</dbReference>
<dbReference type="FunFam" id="2.60.260.20:FF:000008">
    <property type="entry name" value="Curved DNA-binding protein"/>
    <property type="match status" value="1"/>
</dbReference>
<dbReference type="Gene3D" id="1.10.287.110">
    <property type="entry name" value="DnaJ domain"/>
    <property type="match status" value="1"/>
</dbReference>
<dbReference type="Gene3D" id="1.20.5.460">
    <property type="entry name" value="Single helix bin"/>
    <property type="match status" value="1"/>
</dbReference>
<dbReference type="Gene3D" id="2.60.260.20">
    <property type="entry name" value="Urease metallochaperone UreE, N-terminal domain"/>
    <property type="match status" value="2"/>
</dbReference>
<dbReference type="HAMAP" id="MF_01154">
    <property type="entry name" value="CbpA"/>
    <property type="match status" value="1"/>
</dbReference>
<dbReference type="InterPro" id="IPR023859">
    <property type="entry name" value="DNA-bd_curved-DNA"/>
</dbReference>
<dbReference type="InterPro" id="IPR002939">
    <property type="entry name" value="DnaJ_C"/>
</dbReference>
<dbReference type="InterPro" id="IPR001623">
    <property type="entry name" value="DnaJ_domain"/>
</dbReference>
<dbReference type="InterPro" id="IPR018253">
    <property type="entry name" value="DnaJ_domain_CS"/>
</dbReference>
<dbReference type="InterPro" id="IPR008971">
    <property type="entry name" value="HSP40/DnaJ_pept-bd"/>
</dbReference>
<dbReference type="InterPro" id="IPR036869">
    <property type="entry name" value="J_dom_sf"/>
</dbReference>
<dbReference type="NCBIfam" id="NF007618">
    <property type="entry name" value="PRK10266.1"/>
    <property type="match status" value="1"/>
</dbReference>
<dbReference type="PANTHER" id="PTHR43096">
    <property type="entry name" value="DNAJ HOMOLOG 1, MITOCHONDRIAL-RELATED"/>
    <property type="match status" value="1"/>
</dbReference>
<dbReference type="PANTHER" id="PTHR43096:SF52">
    <property type="entry name" value="DNAJ HOMOLOG 1, MITOCHONDRIAL-RELATED"/>
    <property type="match status" value="1"/>
</dbReference>
<dbReference type="Pfam" id="PF00226">
    <property type="entry name" value="DnaJ"/>
    <property type="match status" value="1"/>
</dbReference>
<dbReference type="Pfam" id="PF01556">
    <property type="entry name" value="DnaJ_C"/>
    <property type="match status" value="1"/>
</dbReference>
<dbReference type="PRINTS" id="PR00625">
    <property type="entry name" value="JDOMAIN"/>
</dbReference>
<dbReference type="SMART" id="SM00271">
    <property type="entry name" value="DnaJ"/>
    <property type="match status" value="1"/>
</dbReference>
<dbReference type="SUPFAM" id="SSF46565">
    <property type="entry name" value="Chaperone J-domain"/>
    <property type="match status" value="1"/>
</dbReference>
<dbReference type="SUPFAM" id="SSF49493">
    <property type="entry name" value="HSP40/DnaJ peptide-binding domain"/>
    <property type="match status" value="2"/>
</dbReference>
<dbReference type="PROSITE" id="PS00636">
    <property type="entry name" value="DNAJ_1"/>
    <property type="match status" value="1"/>
</dbReference>
<dbReference type="PROSITE" id="PS50076">
    <property type="entry name" value="DNAJ_2"/>
    <property type="match status" value="1"/>
</dbReference>
<reference key="1">
    <citation type="submission" date="2007-09" db="EMBL/GenBank/DDBJ databases">
        <title>Complete sequence of chromosome of Serratia proteamaculans 568.</title>
        <authorList>
            <consortium name="US DOE Joint Genome Institute"/>
            <person name="Copeland A."/>
            <person name="Lucas S."/>
            <person name="Lapidus A."/>
            <person name="Barry K."/>
            <person name="Glavina del Rio T."/>
            <person name="Dalin E."/>
            <person name="Tice H."/>
            <person name="Pitluck S."/>
            <person name="Chain P."/>
            <person name="Malfatti S."/>
            <person name="Shin M."/>
            <person name="Vergez L."/>
            <person name="Schmutz J."/>
            <person name="Larimer F."/>
            <person name="Land M."/>
            <person name="Hauser L."/>
            <person name="Kyrpides N."/>
            <person name="Kim E."/>
            <person name="Taghavi S."/>
            <person name="Newman L."/>
            <person name="Vangronsveld J."/>
            <person name="van der Lelie D."/>
            <person name="Richardson P."/>
        </authorList>
    </citation>
    <scope>NUCLEOTIDE SEQUENCE [LARGE SCALE GENOMIC DNA]</scope>
    <source>
        <strain>568</strain>
    </source>
</reference>
<evidence type="ECO:0000255" key="1">
    <source>
        <dbReference type="HAMAP-Rule" id="MF_01154"/>
    </source>
</evidence>
<feature type="chain" id="PRO_1000065529" description="Curved DNA-binding protein">
    <location>
        <begin position="1"/>
        <end position="309"/>
    </location>
</feature>
<feature type="domain" description="J" evidence="1">
    <location>
        <begin position="5"/>
        <end position="69"/>
    </location>
</feature>
<organism>
    <name type="scientific">Serratia proteamaculans (strain 568)</name>
    <dbReference type="NCBI Taxonomy" id="399741"/>
    <lineage>
        <taxon>Bacteria</taxon>
        <taxon>Pseudomonadati</taxon>
        <taxon>Pseudomonadota</taxon>
        <taxon>Gammaproteobacteria</taxon>
        <taxon>Enterobacterales</taxon>
        <taxon>Yersiniaceae</taxon>
        <taxon>Serratia</taxon>
    </lineage>
</organism>
<protein>
    <recommendedName>
        <fullName evidence="1">Curved DNA-binding protein</fullName>
    </recommendedName>
</protein>
<name>CBPA_SERP5</name>
<accession>A8GIL6</accession>
<keyword id="KW-0143">Chaperone</keyword>
<keyword id="KW-0963">Cytoplasm</keyword>
<keyword id="KW-0238">DNA-binding</keyword>